<organismHost>
    <name type="scientific">Homo sapiens</name>
    <name type="common">Human</name>
    <dbReference type="NCBI Taxonomy" id="9606"/>
</organismHost>
<name>UL43_HCMVA</name>
<protein>
    <recommendedName>
        <fullName>Tegument protein UL43</fullName>
    </recommendedName>
</protein>
<reference key="1">
    <citation type="journal article" date="1990" name="Curr. Top. Microbiol. Immunol.">
        <title>Analysis of the protein-coding content of the sequence of human cytomegalovirus strain AD169.</title>
        <authorList>
            <person name="Chee M.S."/>
            <person name="Bankier A.T."/>
            <person name="Beck S."/>
            <person name="Bohni R."/>
            <person name="Brown C.M."/>
            <person name="Cerny R."/>
            <person name="Horsnell T."/>
            <person name="Hutchison C.A. III"/>
            <person name="Kouzarides T."/>
            <person name="Martignetti J.A."/>
            <person name="Preddie E."/>
            <person name="Satchwell S.C."/>
            <person name="Tomlinson P."/>
            <person name="Weston K.M."/>
            <person name="Barrell B.G."/>
        </authorList>
    </citation>
    <scope>NUCLEOTIDE SEQUENCE [LARGE SCALE GENOMIC DNA]</scope>
</reference>
<reference key="2">
    <citation type="journal article" date="1997" name="J. Virol.">
        <title>The published DNA sequence of human cytomegalovirus strain AD169 lacks 929 base pairs of DNA affecting genes UL42 and UL43.</title>
        <authorList>
            <person name="Dargan D.J."/>
            <person name="Jamieson F.E."/>
            <person name="Maclean J."/>
            <person name="Dolan A."/>
            <person name="Addison C."/>
            <person name="McGeoch D.J."/>
        </authorList>
    </citation>
    <scope>NUCLEOTIDE SEQUENCE [GENOMIC DNA]</scope>
    <scope>SEQUENCE REVISION</scope>
</reference>
<reference key="3">
    <citation type="journal article" date="2003" name="J. Gen. Virol.">
        <title>The human cytomegalovirus genome revisited: comparison with the chimpanzee cytomegalovirus genome.</title>
        <authorList>
            <person name="Davison A.J."/>
            <person name="Dolan A."/>
            <person name="Akter P."/>
            <person name="Addison C."/>
            <person name="Dargan D.J."/>
            <person name="Alcendor D.J."/>
            <person name="McGeoch D.J."/>
            <person name="Hayward G.S."/>
        </authorList>
    </citation>
    <scope>GENOME REANNOTATION</scope>
</reference>
<reference key="4">
    <citation type="journal article" date="2003" name="J. Gen. Virol.">
        <authorList>
            <person name="Davison A.J."/>
            <person name="Dolan A."/>
            <person name="Akter P."/>
            <person name="Addison C."/>
            <person name="Dargan D.J."/>
            <person name="Alcendor D.J."/>
            <person name="McGeoch D.J."/>
            <person name="Hayward G.S."/>
        </authorList>
    </citation>
    <scope>ERRATUM OF PUBMED:12533697</scope>
</reference>
<reference key="5">
    <citation type="journal article" date="2004" name="J. Virol.">
        <title>Identification of proteins in human cytomegalovirus (HCMV) particles: the HCMV proteome.</title>
        <authorList>
            <person name="Varnum S.M."/>
            <person name="Streblow D.N."/>
            <person name="Monroe M.E."/>
            <person name="Smith P."/>
            <person name="Auberry K.J."/>
            <person name="Pasa-Tolic L."/>
            <person name="Wang D."/>
            <person name="Camp D.G. II"/>
            <person name="Rodland K."/>
            <person name="Wiley S."/>
            <person name="Britt W."/>
            <person name="Shenk T."/>
            <person name="Smith R.D."/>
            <person name="Nelson J.A."/>
        </authorList>
    </citation>
    <scope>IDENTIFICATION</scope>
</reference>
<reference key="6">
    <citation type="journal article" date="2004" name="J. Virol.">
        <authorList>
            <person name="Varnum S.M."/>
            <person name="Streblow D.N."/>
            <person name="Monroe M.E."/>
            <person name="Smith P."/>
            <person name="Auberry K.J."/>
            <person name="Pasa-Tolic L."/>
            <person name="Wang D."/>
            <person name="Camp D.G. II"/>
            <person name="Rodland K."/>
            <person name="Wiley S."/>
            <person name="Britt W."/>
            <person name="Shenk T."/>
            <person name="Smith R.D."/>
            <person name="Nelson J.A."/>
        </authorList>
    </citation>
    <scope>ERRATUM OF PUBMED:15452216</scope>
</reference>
<reference key="7">
    <citation type="journal article" date="2002" name="J. Gen. Virol.">
        <title>The products of human cytomegalovirus genes UL23, UL24, UL43 and US22 are tegument components.</title>
        <authorList>
            <person name="Adair R."/>
            <person name="Douglas E.R."/>
            <person name="Maclean J.B."/>
            <person name="Graham S.Y."/>
            <person name="Aitken J.D."/>
            <person name="Jamieson F.E."/>
            <person name="Dargan D.J."/>
        </authorList>
    </citation>
    <scope>SUBCELLULAR LOCATION</scope>
</reference>
<dbReference type="EMBL" id="X17403">
    <property type="protein sequence ID" value="CAA35402.1"/>
    <property type="status" value="ALT_SEQ"/>
    <property type="molecule type" value="Genomic_DNA"/>
</dbReference>
<dbReference type="EMBL" id="Y13735">
    <property type="protein sequence ID" value="CAA74075.1"/>
    <property type="molecule type" value="Genomic_DNA"/>
</dbReference>
<dbReference type="EMBL" id="BK000394">
    <property type="protein sequence ID" value="DAA00235.1"/>
    <property type="molecule type" value="Genomic_DNA"/>
</dbReference>
<dbReference type="PIR" id="S09806">
    <property type="entry name" value="S09806"/>
</dbReference>
<dbReference type="Proteomes" id="UP000008991">
    <property type="component" value="Segment"/>
</dbReference>
<dbReference type="Proteomes" id="UP000008992">
    <property type="component" value="Segment"/>
</dbReference>
<dbReference type="GO" id="GO:0019033">
    <property type="term" value="C:viral tegument"/>
    <property type="evidence" value="ECO:0007669"/>
    <property type="project" value="UniProtKB-SubCell"/>
</dbReference>
<dbReference type="InterPro" id="IPR003360">
    <property type="entry name" value="US22-like"/>
</dbReference>
<dbReference type="Pfam" id="PF02393">
    <property type="entry name" value="US22"/>
    <property type="match status" value="2"/>
</dbReference>
<gene>
    <name type="primary">UL43</name>
</gene>
<comment type="subcellular location">
    <subcellularLocation>
        <location evidence="2">Virion tegument</location>
    </subcellularLocation>
</comment>
<comment type="similarity">
    <text evidence="3">Belongs to the herpesviridae US22 family.</text>
</comment>
<comment type="caution">
    <text evidence="3">PubMed:2161319 sequence lacks the c-terminus due to an internal deletion.</text>
</comment>
<accession>P16781</accession>
<accession>O39921</accession>
<accession>Q7M6F7</accession>
<evidence type="ECO:0000256" key="1">
    <source>
        <dbReference type="SAM" id="MobiDB-lite"/>
    </source>
</evidence>
<evidence type="ECO:0000269" key="2">
    <source>
    </source>
</evidence>
<evidence type="ECO:0000305" key="3"/>
<keyword id="KW-1185">Reference proteome</keyword>
<keyword id="KW-0946">Virion</keyword>
<keyword id="KW-0920">Virion tegument</keyword>
<feature type="chain" id="PRO_0000116323" description="Tegument protein UL43">
    <location>
        <begin position="1"/>
        <end position="423"/>
    </location>
</feature>
<feature type="region of interest" description="Disordered" evidence="1">
    <location>
        <begin position="1"/>
        <end position="46"/>
    </location>
</feature>
<feature type="compositionally biased region" description="Polar residues" evidence="1">
    <location>
        <begin position="1"/>
        <end position="12"/>
    </location>
</feature>
<organism>
    <name type="scientific">Human cytomegalovirus (strain AD169)</name>
    <name type="common">HHV-5</name>
    <name type="synonym">Human herpesvirus 5</name>
    <dbReference type="NCBI Taxonomy" id="10360"/>
    <lineage>
        <taxon>Viruses</taxon>
        <taxon>Duplodnaviria</taxon>
        <taxon>Heunggongvirae</taxon>
        <taxon>Peploviricota</taxon>
        <taxon>Herviviricetes</taxon>
        <taxon>Herpesvirales</taxon>
        <taxon>Orthoherpesviridae</taxon>
        <taxon>Betaherpesvirinae</taxon>
        <taxon>Cytomegalovirus</taxon>
        <taxon>Cytomegalovirus humanbeta5</taxon>
        <taxon>Human cytomegalovirus</taxon>
    </lineage>
</organism>
<sequence length="423" mass="47704">MEKTPAETTAVSAGNVPRDSIPCITNVSADTRGRTRPSRPATVPQRRPARIGHFRRRSASLSFLDWPDGSVTEGVRTTSASVAASAARFDEIRRRRQSINDEMKERTLEDALAVELVNETFRCSVTSDARKDLQKLVRRVSGTVLRLSWPNGWFFTYCDLLRVGYFGHLNIKGLEKTFLCCDKFLLPVGTVSRCEAIGRPPLPVLIGEGGRVYVYSPVVESLYLVSRSGFRGFVQEGLRNYAPLREELGYVRFETGGDVGREFMLARDLLALWRLCMKREGSIFSWRDGNEALTTVVLNGSQTYEDPAHGNWLKETCSLNVLQVFVVRAVPVESQQRLDISILVNESGAVFGVHPETRQAHFLARGLLGFFRVGFLRFCNNYCFARDCFTHPESVAPAYRATGCPRELFCRRLRKKKGLFARR</sequence>
<proteinExistence type="inferred from homology"/>